<name>NORM_ACIAD</name>
<keyword id="KW-0050">Antiport</keyword>
<keyword id="KW-0997">Cell inner membrane</keyword>
<keyword id="KW-1003">Cell membrane</keyword>
<keyword id="KW-0406">Ion transport</keyword>
<keyword id="KW-0472">Membrane</keyword>
<keyword id="KW-0812">Transmembrane</keyword>
<keyword id="KW-1133">Transmembrane helix</keyword>
<keyword id="KW-0813">Transport</keyword>
<protein>
    <recommendedName>
        <fullName>Probable multidrug resistance protein NorM</fullName>
    </recommendedName>
    <alternativeName>
        <fullName>Multidrug-efflux transporter</fullName>
    </alternativeName>
</protein>
<proteinExistence type="inferred from homology"/>
<comment type="function">
    <text evidence="1">Multidrug efflux pump.</text>
</comment>
<comment type="subcellular location">
    <subcellularLocation>
        <location evidence="1">Cell inner membrane</location>
        <topology evidence="1">Multi-pass membrane protein</topology>
    </subcellularLocation>
</comment>
<comment type="similarity">
    <text evidence="3">Belongs to the multi antimicrobial extrusion (MATE) (TC 2.A.66.1) family.</text>
</comment>
<accession>Q6FEY7</accession>
<sequence length="449" mass="49013">MAKVAGFRFELKQLFHLMWPILITQFAQAGLGLIDTIMAGHLSANDLAAIAVGVGLWMPVMLLFSAIMIATTPLVAEAKGARTPEHIPVIVRQSLWVAVSLGVIAMLILQLMPFLLPILGVPESLQPKAGLFLHAIGFGMPAVTMYAALRGYSEALGYPRPVTVISLLALVVLVPLNYIFMYGIGPVPHLGSAGCGFATAILQWLMLITLASYIYRAKAYQSTQVFSHWERINLTLVKRILKLGLPIGLAVFFEVSIFSTGAIVLSPLGDTLVAAHQIAMSVTSQLFMIPMSLAIALTIRVGMYYGEKNWVSMRLVQKLGLATATFFAMCTMSLIWFARPQIVAIYTQDPAVFDIALYLLLFAMAYQLMDAWQVGAAGCLRGMQDTKGPMWITLIAYWVVAFPVGTYLARVAKMGPAGVWLGLITGLSIACVLLLMRLYRNNHKLAQQS</sequence>
<evidence type="ECO:0000250" key="1"/>
<evidence type="ECO:0000255" key="2"/>
<evidence type="ECO:0000305" key="3"/>
<gene>
    <name type="primary">norM</name>
    <name type="ordered locus">ACIAD0429</name>
</gene>
<feature type="chain" id="PRO_0000164194" description="Probable multidrug resistance protein NorM">
    <location>
        <begin position="1"/>
        <end position="449"/>
    </location>
</feature>
<feature type="transmembrane region" description="Helical" evidence="2">
    <location>
        <begin position="17"/>
        <end position="39"/>
    </location>
</feature>
<feature type="transmembrane region" description="Helical" evidence="2">
    <location>
        <begin position="54"/>
        <end position="76"/>
    </location>
</feature>
<feature type="transmembrane region" description="Helical" evidence="2">
    <location>
        <begin position="97"/>
        <end position="119"/>
    </location>
</feature>
<feature type="transmembrane region" description="Helical" evidence="2">
    <location>
        <begin position="129"/>
        <end position="151"/>
    </location>
</feature>
<feature type="transmembrane region" description="Helical" evidence="2">
    <location>
        <begin position="164"/>
        <end position="186"/>
    </location>
</feature>
<feature type="transmembrane region" description="Helical" evidence="2">
    <location>
        <begin position="196"/>
        <end position="215"/>
    </location>
</feature>
<feature type="transmembrane region" description="Helical" evidence="2">
    <location>
        <begin position="243"/>
        <end position="265"/>
    </location>
</feature>
<feature type="transmembrane region" description="Helical" evidence="2">
    <location>
        <begin position="280"/>
        <end position="302"/>
    </location>
</feature>
<feature type="transmembrane region" description="Helical" evidence="2">
    <location>
        <begin position="315"/>
        <end position="337"/>
    </location>
</feature>
<feature type="transmembrane region" description="Helical" evidence="2">
    <location>
        <begin position="352"/>
        <end position="369"/>
    </location>
</feature>
<feature type="transmembrane region" description="Helical" evidence="2">
    <location>
        <begin position="390"/>
        <end position="412"/>
    </location>
</feature>
<feature type="transmembrane region" description="Helical" evidence="2">
    <location>
        <begin position="417"/>
        <end position="439"/>
    </location>
</feature>
<organism>
    <name type="scientific">Acinetobacter baylyi (strain ATCC 33305 / BD413 / ADP1)</name>
    <dbReference type="NCBI Taxonomy" id="62977"/>
    <lineage>
        <taxon>Bacteria</taxon>
        <taxon>Pseudomonadati</taxon>
        <taxon>Pseudomonadota</taxon>
        <taxon>Gammaproteobacteria</taxon>
        <taxon>Moraxellales</taxon>
        <taxon>Moraxellaceae</taxon>
        <taxon>Acinetobacter</taxon>
    </lineage>
</organism>
<dbReference type="EMBL" id="CR543861">
    <property type="protein sequence ID" value="CAG67371.1"/>
    <property type="molecule type" value="Genomic_DNA"/>
</dbReference>
<dbReference type="RefSeq" id="WP_004920318.1">
    <property type="nucleotide sequence ID" value="NC_005966.1"/>
</dbReference>
<dbReference type="SMR" id="Q6FEY7"/>
<dbReference type="STRING" id="202950.GCA_001485005_00684"/>
<dbReference type="GeneID" id="45232925"/>
<dbReference type="KEGG" id="aci:ACIAD0429"/>
<dbReference type="eggNOG" id="COG0534">
    <property type="taxonomic scope" value="Bacteria"/>
</dbReference>
<dbReference type="HOGENOM" id="CLU_012893_6_0_6"/>
<dbReference type="OrthoDB" id="9780160at2"/>
<dbReference type="BioCyc" id="ASP62977:ACIAD_RS01985-MONOMER"/>
<dbReference type="Proteomes" id="UP000000430">
    <property type="component" value="Chromosome"/>
</dbReference>
<dbReference type="GO" id="GO:0005886">
    <property type="term" value="C:plasma membrane"/>
    <property type="evidence" value="ECO:0007669"/>
    <property type="project" value="UniProtKB-SubCell"/>
</dbReference>
<dbReference type="GO" id="GO:0015297">
    <property type="term" value="F:antiporter activity"/>
    <property type="evidence" value="ECO:0007669"/>
    <property type="project" value="UniProtKB-KW"/>
</dbReference>
<dbReference type="GO" id="GO:0042910">
    <property type="term" value="F:xenobiotic transmembrane transporter activity"/>
    <property type="evidence" value="ECO:0007669"/>
    <property type="project" value="InterPro"/>
</dbReference>
<dbReference type="GO" id="GO:0006811">
    <property type="term" value="P:monoatomic ion transport"/>
    <property type="evidence" value="ECO:0007669"/>
    <property type="project" value="UniProtKB-KW"/>
</dbReference>
<dbReference type="CDD" id="cd13131">
    <property type="entry name" value="MATE_NorM_like"/>
    <property type="match status" value="1"/>
</dbReference>
<dbReference type="InterPro" id="IPR002528">
    <property type="entry name" value="MATE_fam"/>
</dbReference>
<dbReference type="InterPro" id="IPR050222">
    <property type="entry name" value="MATE_MdtK"/>
</dbReference>
<dbReference type="InterPro" id="IPR048279">
    <property type="entry name" value="MdtK-like"/>
</dbReference>
<dbReference type="NCBIfam" id="TIGR00797">
    <property type="entry name" value="matE"/>
    <property type="match status" value="1"/>
</dbReference>
<dbReference type="PANTHER" id="PTHR43298:SF2">
    <property type="entry name" value="FMN_FAD EXPORTER YEEO-RELATED"/>
    <property type="match status" value="1"/>
</dbReference>
<dbReference type="PANTHER" id="PTHR43298">
    <property type="entry name" value="MULTIDRUG RESISTANCE PROTEIN NORM-RELATED"/>
    <property type="match status" value="1"/>
</dbReference>
<dbReference type="Pfam" id="PF01554">
    <property type="entry name" value="MatE"/>
    <property type="match status" value="2"/>
</dbReference>
<dbReference type="PIRSF" id="PIRSF006603">
    <property type="entry name" value="DinF"/>
    <property type="match status" value="1"/>
</dbReference>
<reference key="1">
    <citation type="journal article" date="2004" name="Nucleic Acids Res.">
        <title>Unique features revealed by the genome sequence of Acinetobacter sp. ADP1, a versatile and naturally transformation competent bacterium.</title>
        <authorList>
            <person name="Barbe V."/>
            <person name="Vallenet D."/>
            <person name="Fonknechten N."/>
            <person name="Kreimeyer A."/>
            <person name="Oztas S."/>
            <person name="Labarre L."/>
            <person name="Cruveiller S."/>
            <person name="Robert C."/>
            <person name="Duprat S."/>
            <person name="Wincker P."/>
            <person name="Ornston L.N."/>
            <person name="Weissenbach J."/>
            <person name="Marliere P."/>
            <person name="Cohen G.N."/>
            <person name="Medigue C."/>
        </authorList>
    </citation>
    <scope>NUCLEOTIDE SEQUENCE [LARGE SCALE GENOMIC DNA]</scope>
    <source>
        <strain>ATCC 33305 / BD413 / ADP1</strain>
    </source>
</reference>